<comment type="function">
    <text evidence="1">Catalyzes the interconversion of methylthioribose-1-phosphate (MTR-1-P) into methylthioribulose-1-phosphate (MTRu-1-P).</text>
</comment>
<comment type="catalytic activity">
    <reaction evidence="1">
        <text>5-(methylsulfanyl)-alpha-D-ribose 1-phosphate = 5-(methylsulfanyl)-D-ribulose 1-phosphate</text>
        <dbReference type="Rhea" id="RHEA:19989"/>
        <dbReference type="ChEBI" id="CHEBI:58533"/>
        <dbReference type="ChEBI" id="CHEBI:58548"/>
        <dbReference type="EC" id="5.3.1.23"/>
    </reaction>
</comment>
<comment type="pathway">
    <text evidence="1">Amino-acid biosynthesis; L-methionine biosynthesis via salvage pathway; L-methionine from S-methyl-5-thio-alpha-D-ribose 1-phosphate: step 1/6.</text>
</comment>
<comment type="similarity">
    <text evidence="2">Belongs to the eIF-2B alpha/beta/delta subunits family. MtnA subfamily.</text>
</comment>
<comment type="sequence caution" evidence="2">
    <conflict type="erroneous initiation">
        <sequence resource="EMBL-CDS" id="AAW75661"/>
    </conflict>
</comment>
<organism>
    <name type="scientific">Xanthomonas oryzae pv. oryzae (strain KACC10331 / KXO85)</name>
    <dbReference type="NCBI Taxonomy" id="291331"/>
    <lineage>
        <taxon>Bacteria</taxon>
        <taxon>Pseudomonadati</taxon>
        <taxon>Pseudomonadota</taxon>
        <taxon>Gammaproteobacteria</taxon>
        <taxon>Lysobacterales</taxon>
        <taxon>Lysobacteraceae</taxon>
        <taxon>Xanthomonas</taxon>
    </lineage>
</organism>
<gene>
    <name evidence="1" type="primary">mtnA</name>
    <name type="ordered locus">XOO2407</name>
</gene>
<protein>
    <recommendedName>
        <fullName evidence="1">Methylthioribose-1-phosphate isomerase</fullName>
        <shortName evidence="1">M1Pi</shortName>
        <shortName evidence="1">MTR-1-P isomerase</shortName>
        <ecNumber evidence="1">5.3.1.23</ecNumber>
    </recommendedName>
    <alternativeName>
        <fullName evidence="1">S-methyl-5-thioribose-1-phosphate isomerase</fullName>
    </alternativeName>
</protein>
<sequence length="354" mass="37271">MNDSAHIDYARYDHIRPLLWTGDALELLDQRKLPFVVEHVRCDTSDAVAEAIHSLAVRGAPAIGIAAGWGVALAARDIAADDGNAALQKLEPALLRLNAARPTAVNLAWALMRMRRVLGAAGADWRAVIAREAQAIADEDLAANRHMGALGAALIAPGSGVLTHCNTGSLATAGFGTALGVIRAGMAQQRIAKVFAGETRPWLQGARLTVWELQQDGIDATLIADSAASHLMKSGLVQWVIVGADRICANGDTANKIGTYQLAIAARHHGVKFMVVAPSSTVDMATASGDQIEIEQRDPGELFGVGGVRTVADGIHAWNPVFDVTPGDLIDAIVTERGVIAQPDQARMQAAFGN</sequence>
<accession>Q5H060</accession>
<proteinExistence type="inferred from homology"/>
<keyword id="KW-0028">Amino-acid biosynthesis</keyword>
<keyword id="KW-0413">Isomerase</keyword>
<keyword id="KW-0486">Methionine biosynthesis</keyword>
<keyword id="KW-1185">Reference proteome</keyword>
<evidence type="ECO:0000255" key="1">
    <source>
        <dbReference type="HAMAP-Rule" id="MF_01678"/>
    </source>
</evidence>
<evidence type="ECO:0000305" key="2"/>
<reference key="1">
    <citation type="journal article" date="2005" name="Nucleic Acids Res.">
        <title>The genome sequence of Xanthomonas oryzae pathovar oryzae KACC10331, the bacterial blight pathogen of rice.</title>
        <authorList>
            <person name="Lee B.-M."/>
            <person name="Park Y.-J."/>
            <person name="Park D.-S."/>
            <person name="Kang H.-W."/>
            <person name="Kim J.-G."/>
            <person name="Song E.-S."/>
            <person name="Park I.-C."/>
            <person name="Yoon U.-H."/>
            <person name="Hahn J.-H."/>
            <person name="Koo B.-S."/>
            <person name="Lee G.-B."/>
            <person name="Kim H."/>
            <person name="Park H.-S."/>
            <person name="Yoon K.-O."/>
            <person name="Kim J.-H."/>
            <person name="Jung C.-H."/>
            <person name="Koh N.-H."/>
            <person name="Seo J.-S."/>
            <person name="Go S.-J."/>
        </authorList>
    </citation>
    <scope>NUCLEOTIDE SEQUENCE [LARGE SCALE GENOMIC DNA]</scope>
    <source>
        <strain>KACC10331 / KXO85</strain>
    </source>
</reference>
<dbReference type="EC" id="5.3.1.23" evidence="1"/>
<dbReference type="EMBL" id="AE013598">
    <property type="protein sequence ID" value="AAW75661.1"/>
    <property type="status" value="ALT_INIT"/>
    <property type="molecule type" value="Genomic_DNA"/>
</dbReference>
<dbReference type="SMR" id="Q5H060"/>
<dbReference type="STRING" id="291331.XOO2407"/>
<dbReference type="KEGG" id="xoo:XOO2407"/>
<dbReference type="HOGENOM" id="CLU_016218_1_2_6"/>
<dbReference type="UniPathway" id="UPA00904">
    <property type="reaction ID" value="UER00874"/>
</dbReference>
<dbReference type="Proteomes" id="UP000006735">
    <property type="component" value="Chromosome"/>
</dbReference>
<dbReference type="GO" id="GO:0046523">
    <property type="term" value="F:S-methyl-5-thioribose-1-phosphate isomerase activity"/>
    <property type="evidence" value="ECO:0007669"/>
    <property type="project" value="UniProtKB-UniRule"/>
</dbReference>
<dbReference type="GO" id="GO:0019509">
    <property type="term" value="P:L-methionine salvage from methylthioadenosine"/>
    <property type="evidence" value="ECO:0007669"/>
    <property type="project" value="UniProtKB-UniRule"/>
</dbReference>
<dbReference type="FunFam" id="1.20.120.420:FF:000007">
    <property type="entry name" value="Methylthioribose-1-phosphate isomerase"/>
    <property type="match status" value="1"/>
</dbReference>
<dbReference type="FunFam" id="3.40.50.10470:FF:000006">
    <property type="entry name" value="Methylthioribose-1-phosphate isomerase"/>
    <property type="match status" value="1"/>
</dbReference>
<dbReference type="Gene3D" id="1.20.120.420">
    <property type="entry name" value="translation initiation factor eif-2b, domain 1"/>
    <property type="match status" value="1"/>
</dbReference>
<dbReference type="Gene3D" id="3.40.50.10470">
    <property type="entry name" value="Translation initiation factor eif-2b, domain 2"/>
    <property type="match status" value="1"/>
</dbReference>
<dbReference type="HAMAP" id="MF_01678">
    <property type="entry name" value="Salvage_MtnA"/>
    <property type="match status" value="1"/>
</dbReference>
<dbReference type="InterPro" id="IPR000649">
    <property type="entry name" value="IF-2B-related"/>
</dbReference>
<dbReference type="InterPro" id="IPR005251">
    <property type="entry name" value="IF-M1Pi"/>
</dbReference>
<dbReference type="InterPro" id="IPR042529">
    <property type="entry name" value="IF_2B-like_C"/>
</dbReference>
<dbReference type="InterPro" id="IPR011559">
    <property type="entry name" value="Initiation_fac_2B_a/b/d"/>
</dbReference>
<dbReference type="InterPro" id="IPR027363">
    <property type="entry name" value="M1Pi_N"/>
</dbReference>
<dbReference type="InterPro" id="IPR037171">
    <property type="entry name" value="NagB/RpiA_transferase-like"/>
</dbReference>
<dbReference type="NCBIfam" id="TIGR00524">
    <property type="entry name" value="eIF-2B_rel"/>
    <property type="match status" value="1"/>
</dbReference>
<dbReference type="NCBIfam" id="NF004326">
    <property type="entry name" value="PRK05720.1"/>
    <property type="match status" value="1"/>
</dbReference>
<dbReference type="NCBIfam" id="TIGR00512">
    <property type="entry name" value="salvage_mtnA"/>
    <property type="match status" value="1"/>
</dbReference>
<dbReference type="PANTHER" id="PTHR43475">
    <property type="entry name" value="METHYLTHIORIBOSE-1-PHOSPHATE ISOMERASE"/>
    <property type="match status" value="1"/>
</dbReference>
<dbReference type="PANTHER" id="PTHR43475:SF1">
    <property type="entry name" value="METHYLTHIORIBOSE-1-PHOSPHATE ISOMERASE"/>
    <property type="match status" value="1"/>
</dbReference>
<dbReference type="Pfam" id="PF01008">
    <property type="entry name" value="IF-2B"/>
    <property type="match status" value="1"/>
</dbReference>
<dbReference type="SUPFAM" id="SSF100950">
    <property type="entry name" value="NagB/RpiA/CoA transferase-like"/>
    <property type="match status" value="1"/>
</dbReference>
<name>MTNA_XANOR</name>
<feature type="chain" id="PRO_0000357272" description="Methylthioribose-1-phosphate isomerase">
    <location>
        <begin position="1"/>
        <end position="354"/>
    </location>
</feature>
<feature type="active site" description="Proton donor" evidence="1">
    <location>
        <position position="245"/>
    </location>
</feature>
<feature type="binding site" evidence="1">
    <location>
        <begin position="58"/>
        <end position="60"/>
    </location>
    <ligand>
        <name>substrate</name>
    </ligand>
</feature>
<feature type="binding site" evidence="1">
    <location>
        <position position="101"/>
    </location>
    <ligand>
        <name>substrate</name>
    </ligand>
</feature>
<feature type="binding site" evidence="1">
    <location>
        <position position="204"/>
    </location>
    <ligand>
        <name>substrate</name>
    </ligand>
</feature>
<feature type="binding site" evidence="1">
    <location>
        <begin position="255"/>
        <end position="256"/>
    </location>
    <ligand>
        <name>substrate</name>
    </ligand>
</feature>
<feature type="site" description="Transition state stabilizer" evidence="1">
    <location>
        <position position="165"/>
    </location>
</feature>